<comment type="function">
    <text evidence="1">Required for the assembly of the rivet at the earliest stage of flagellar biosynthesis.</text>
</comment>
<comment type="subcellular location">
    <subcellularLocation>
        <location evidence="1">Cell inner membrane</location>
        <topology evidence="1">Multi-pass membrane protein</topology>
    </subcellularLocation>
    <subcellularLocation>
        <location evidence="1">Bacterial flagellum basal body</location>
    </subcellularLocation>
</comment>
<comment type="similarity">
    <text evidence="3">Belongs to the FliQ/MopD/SpaQ family.</text>
</comment>
<accession>P0AC09</accession>
<accession>P33134</accession>
<keyword id="KW-0975">Bacterial flagellum</keyword>
<keyword id="KW-0997">Cell inner membrane</keyword>
<keyword id="KW-1003">Cell membrane</keyword>
<keyword id="KW-0472">Membrane</keyword>
<keyword id="KW-1185">Reference proteome</keyword>
<keyword id="KW-0812">Transmembrane</keyword>
<keyword id="KW-1133">Transmembrane helix</keyword>
<sequence length="89" mass="9632">MTPESVMMMGTEAMKVALALAAPLLLVALVTGLIISILQAATQINEMTLSFIPKIIAVFIAIIIAGPWMLNLLLDYVRTLFTNLPYIIG</sequence>
<dbReference type="EMBL" id="AE005174">
    <property type="protein sequence ID" value="AAG56964.1"/>
    <property type="molecule type" value="Genomic_DNA"/>
</dbReference>
<dbReference type="EMBL" id="BA000007">
    <property type="protein sequence ID" value="BAB36111.1"/>
    <property type="molecule type" value="Genomic_DNA"/>
</dbReference>
<dbReference type="PIR" id="H85812">
    <property type="entry name" value="H85812"/>
</dbReference>
<dbReference type="PIR" id="H90964">
    <property type="entry name" value="H90964"/>
</dbReference>
<dbReference type="RefSeq" id="NP_310715.1">
    <property type="nucleotide sequence ID" value="NC_002695.1"/>
</dbReference>
<dbReference type="RefSeq" id="WP_000187358.1">
    <property type="nucleotide sequence ID" value="NZ_VOAI01000028.1"/>
</dbReference>
<dbReference type="SMR" id="P0AC09"/>
<dbReference type="STRING" id="155864.Z3039"/>
<dbReference type="GeneID" id="914194"/>
<dbReference type="GeneID" id="93775236"/>
<dbReference type="KEGG" id="ece:Z3039"/>
<dbReference type="KEGG" id="ecs:ECs_2688"/>
<dbReference type="PATRIC" id="fig|386585.9.peg.2816"/>
<dbReference type="eggNOG" id="COG1987">
    <property type="taxonomic scope" value="Bacteria"/>
</dbReference>
<dbReference type="HOGENOM" id="CLU_164516_2_0_6"/>
<dbReference type="OMA" id="EFTRYLW"/>
<dbReference type="Proteomes" id="UP000000558">
    <property type="component" value="Chromosome"/>
</dbReference>
<dbReference type="Proteomes" id="UP000002519">
    <property type="component" value="Chromosome"/>
</dbReference>
<dbReference type="GO" id="GO:0009425">
    <property type="term" value="C:bacterial-type flagellum basal body"/>
    <property type="evidence" value="ECO:0007669"/>
    <property type="project" value="UniProtKB-SubCell"/>
</dbReference>
<dbReference type="GO" id="GO:0005886">
    <property type="term" value="C:plasma membrane"/>
    <property type="evidence" value="ECO:0007669"/>
    <property type="project" value="UniProtKB-SubCell"/>
</dbReference>
<dbReference type="GO" id="GO:0044780">
    <property type="term" value="P:bacterial-type flagellum assembly"/>
    <property type="evidence" value="ECO:0007669"/>
    <property type="project" value="InterPro"/>
</dbReference>
<dbReference type="GO" id="GO:0009306">
    <property type="term" value="P:protein secretion"/>
    <property type="evidence" value="ECO:0007669"/>
    <property type="project" value="InterPro"/>
</dbReference>
<dbReference type="InterPro" id="IPR002191">
    <property type="entry name" value="Bac_export_3"/>
</dbReference>
<dbReference type="InterPro" id="IPR006305">
    <property type="entry name" value="FliQ"/>
</dbReference>
<dbReference type="NCBIfam" id="TIGR01402">
    <property type="entry name" value="fliQ"/>
    <property type="match status" value="1"/>
</dbReference>
<dbReference type="PANTHER" id="PTHR34040">
    <property type="entry name" value="FLAGELLAR BIOSYNTHETIC PROTEIN FLIQ"/>
    <property type="match status" value="1"/>
</dbReference>
<dbReference type="PANTHER" id="PTHR34040:SF2">
    <property type="entry name" value="FLAGELLAR BIOSYNTHETIC PROTEIN FLIQ"/>
    <property type="match status" value="1"/>
</dbReference>
<dbReference type="Pfam" id="PF01313">
    <property type="entry name" value="Bac_export_3"/>
    <property type="match status" value="1"/>
</dbReference>
<dbReference type="PIRSF" id="PIRSF004669">
    <property type="entry name" value="FliQ"/>
    <property type="match status" value="1"/>
</dbReference>
<dbReference type="PRINTS" id="PR00952">
    <property type="entry name" value="TYPE3IMQPROT"/>
</dbReference>
<evidence type="ECO:0000250" key="1"/>
<evidence type="ECO:0000255" key="2"/>
<evidence type="ECO:0000305" key="3"/>
<proteinExistence type="inferred from homology"/>
<feature type="chain" id="PRO_0000129094" description="Flagellar biosynthetic protein FliQ">
    <location>
        <begin position="1"/>
        <end position="89"/>
    </location>
</feature>
<feature type="transmembrane region" description="Helical" evidence="2">
    <location>
        <begin position="16"/>
        <end position="40"/>
    </location>
</feature>
<feature type="transmembrane region" description="Helical" evidence="2">
    <location>
        <begin position="55"/>
        <end position="75"/>
    </location>
</feature>
<organism>
    <name type="scientific">Escherichia coli O157:H7</name>
    <dbReference type="NCBI Taxonomy" id="83334"/>
    <lineage>
        <taxon>Bacteria</taxon>
        <taxon>Pseudomonadati</taxon>
        <taxon>Pseudomonadota</taxon>
        <taxon>Gammaproteobacteria</taxon>
        <taxon>Enterobacterales</taxon>
        <taxon>Enterobacteriaceae</taxon>
        <taxon>Escherichia</taxon>
    </lineage>
</organism>
<protein>
    <recommendedName>
        <fullName>Flagellar biosynthetic protein FliQ</fullName>
    </recommendedName>
</protein>
<name>FLIQ_ECO57</name>
<reference key="1">
    <citation type="journal article" date="2001" name="Nature">
        <title>Genome sequence of enterohaemorrhagic Escherichia coli O157:H7.</title>
        <authorList>
            <person name="Perna N.T."/>
            <person name="Plunkett G. III"/>
            <person name="Burland V."/>
            <person name="Mau B."/>
            <person name="Glasner J.D."/>
            <person name="Rose D.J."/>
            <person name="Mayhew G.F."/>
            <person name="Evans P.S."/>
            <person name="Gregor J."/>
            <person name="Kirkpatrick H.A."/>
            <person name="Posfai G."/>
            <person name="Hackett J."/>
            <person name="Klink S."/>
            <person name="Boutin A."/>
            <person name="Shao Y."/>
            <person name="Miller L."/>
            <person name="Grotbeck E.J."/>
            <person name="Davis N.W."/>
            <person name="Lim A."/>
            <person name="Dimalanta E.T."/>
            <person name="Potamousis K."/>
            <person name="Apodaca J."/>
            <person name="Anantharaman T.S."/>
            <person name="Lin J."/>
            <person name="Yen G."/>
            <person name="Schwartz D.C."/>
            <person name="Welch R.A."/>
            <person name="Blattner F.R."/>
        </authorList>
    </citation>
    <scope>NUCLEOTIDE SEQUENCE [LARGE SCALE GENOMIC DNA]</scope>
    <source>
        <strain>O157:H7 / EDL933 / ATCC 700927 / EHEC</strain>
    </source>
</reference>
<reference key="2">
    <citation type="journal article" date="2001" name="DNA Res.">
        <title>Complete genome sequence of enterohemorrhagic Escherichia coli O157:H7 and genomic comparison with a laboratory strain K-12.</title>
        <authorList>
            <person name="Hayashi T."/>
            <person name="Makino K."/>
            <person name="Ohnishi M."/>
            <person name="Kurokawa K."/>
            <person name="Ishii K."/>
            <person name="Yokoyama K."/>
            <person name="Han C.-G."/>
            <person name="Ohtsubo E."/>
            <person name="Nakayama K."/>
            <person name="Murata T."/>
            <person name="Tanaka M."/>
            <person name="Tobe T."/>
            <person name="Iida T."/>
            <person name="Takami H."/>
            <person name="Honda T."/>
            <person name="Sasakawa C."/>
            <person name="Ogasawara N."/>
            <person name="Yasunaga T."/>
            <person name="Kuhara S."/>
            <person name="Shiba T."/>
            <person name="Hattori M."/>
            <person name="Shinagawa H."/>
        </authorList>
    </citation>
    <scope>NUCLEOTIDE SEQUENCE [LARGE SCALE GENOMIC DNA]</scope>
    <source>
        <strain>O157:H7 / Sakai / RIMD 0509952 / EHEC</strain>
    </source>
</reference>
<gene>
    <name type="primary">fliQ</name>
    <name type="ordered locus">Z3039</name>
    <name type="ordered locus">ECs2688</name>
</gene>